<organism>
    <name type="scientific">Salmonella heidelberg (strain SL476)</name>
    <dbReference type="NCBI Taxonomy" id="454169"/>
    <lineage>
        <taxon>Bacteria</taxon>
        <taxon>Pseudomonadati</taxon>
        <taxon>Pseudomonadota</taxon>
        <taxon>Gammaproteobacteria</taxon>
        <taxon>Enterobacterales</taxon>
        <taxon>Enterobacteriaceae</taxon>
        <taxon>Salmonella</taxon>
    </lineage>
</organism>
<evidence type="ECO:0000255" key="1">
    <source>
        <dbReference type="HAMAP-Rule" id="MF_00402"/>
    </source>
</evidence>
<evidence type="ECO:0000305" key="2"/>
<feature type="chain" id="PRO_1000193879" description="Large ribosomal subunit protein bL19">
    <location>
        <begin position="1"/>
        <end position="115"/>
    </location>
</feature>
<reference key="1">
    <citation type="journal article" date="2011" name="J. Bacteriol.">
        <title>Comparative genomics of 28 Salmonella enterica isolates: evidence for CRISPR-mediated adaptive sublineage evolution.</title>
        <authorList>
            <person name="Fricke W.F."/>
            <person name="Mammel M.K."/>
            <person name="McDermott P.F."/>
            <person name="Tartera C."/>
            <person name="White D.G."/>
            <person name="Leclerc J.E."/>
            <person name="Ravel J."/>
            <person name="Cebula T.A."/>
        </authorList>
    </citation>
    <scope>NUCLEOTIDE SEQUENCE [LARGE SCALE GENOMIC DNA]</scope>
    <source>
        <strain>SL476</strain>
    </source>
</reference>
<dbReference type="EMBL" id="CP001120">
    <property type="protein sequence ID" value="ACF67630.1"/>
    <property type="molecule type" value="Genomic_DNA"/>
</dbReference>
<dbReference type="RefSeq" id="WP_000065257.1">
    <property type="nucleotide sequence ID" value="NC_011083.1"/>
</dbReference>
<dbReference type="SMR" id="B4TE50"/>
<dbReference type="KEGG" id="seh:SeHA_C2889"/>
<dbReference type="HOGENOM" id="CLU_103507_2_1_6"/>
<dbReference type="Proteomes" id="UP000001866">
    <property type="component" value="Chromosome"/>
</dbReference>
<dbReference type="GO" id="GO:0022625">
    <property type="term" value="C:cytosolic large ribosomal subunit"/>
    <property type="evidence" value="ECO:0007669"/>
    <property type="project" value="TreeGrafter"/>
</dbReference>
<dbReference type="GO" id="GO:0003735">
    <property type="term" value="F:structural constituent of ribosome"/>
    <property type="evidence" value="ECO:0007669"/>
    <property type="project" value="InterPro"/>
</dbReference>
<dbReference type="GO" id="GO:0006412">
    <property type="term" value="P:translation"/>
    <property type="evidence" value="ECO:0007669"/>
    <property type="project" value="UniProtKB-UniRule"/>
</dbReference>
<dbReference type="FunFam" id="2.30.30.790:FF:000001">
    <property type="entry name" value="50S ribosomal protein L19"/>
    <property type="match status" value="1"/>
</dbReference>
<dbReference type="Gene3D" id="2.30.30.790">
    <property type="match status" value="1"/>
</dbReference>
<dbReference type="HAMAP" id="MF_00402">
    <property type="entry name" value="Ribosomal_bL19"/>
    <property type="match status" value="1"/>
</dbReference>
<dbReference type="InterPro" id="IPR001857">
    <property type="entry name" value="Ribosomal_bL19"/>
</dbReference>
<dbReference type="InterPro" id="IPR018257">
    <property type="entry name" value="Ribosomal_bL19_CS"/>
</dbReference>
<dbReference type="InterPro" id="IPR038657">
    <property type="entry name" value="Ribosomal_bL19_sf"/>
</dbReference>
<dbReference type="InterPro" id="IPR008991">
    <property type="entry name" value="Translation_prot_SH3-like_sf"/>
</dbReference>
<dbReference type="NCBIfam" id="TIGR01024">
    <property type="entry name" value="rplS_bact"/>
    <property type="match status" value="1"/>
</dbReference>
<dbReference type="PANTHER" id="PTHR15680:SF9">
    <property type="entry name" value="LARGE RIBOSOMAL SUBUNIT PROTEIN BL19M"/>
    <property type="match status" value="1"/>
</dbReference>
<dbReference type="PANTHER" id="PTHR15680">
    <property type="entry name" value="RIBOSOMAL PROTEIN L19"/>
    <property type="match status" value="1"/>
</dbReference>
<dbReference type="Pfam" id="PF01245">
    <property type="entry name" value="Ribosomal_L19"/>
    <property type="match status" value="1"/>
</dbReference>
<dbReference type="PIRSF" id="PIRSF002191">
    <property type="entry name" value="Ribosomal_L19"/>
    <property type="match status" value="1"/>
</dbReference>
<dbReference type="PRINTS" id="PR00061">
    <property type="entry name" value="RIBOSOMALL19"/>
</dbReference>
<dbReference type="SUPFAM" id="SSF50104">
    <property type="entry name" value="Translation proteins SH3-like domain"/>
    <property type="match status" value="1"/>
</dbReference>
<dbReference type="PROSITE" id="PS01015">
    <property type="entry name" value="RIBOSOMAL_L19"/>
    <property type="match status" value="1"/>
</dbReference>
<accession>B4TE50</accession>
<keyword id="KW-0687">Ribonucleoprotein</keyword>
<keyword id="KW-0689">Ribosomal protein</keyword>
<proteinExistence type="inferred from homology"/>
<name>RL19_SALHS</name>
<protein>
    <recommendedName>
        <fullName evidence="1">Large ribosomal subunit protein bL19</fullName>
    </recommendedName>
    <alternativeName>
        <fullName evidence="2">50S ribosomal protein L19</fullName>
    </alternativeName>
</protein>
<comment type="function">
    <text evidence="1">This protein is located at the 30S-50S ribosomal subunit interface and may play a role in the structure and function of the aminoacyl-tRNA binding site.</text>
</comment>
<comment type="similarity">
    <text evidence="1">Belongs to the bacterial ribosomal protein bL19 family.</text>
</comment>
<sequence>MSNIIKQLEQEQMKQNVPSFRPGDTVEVKVWVVEGTKKRLQAFEGVVIAIRNRGLHSAFTVRKISNGEGVERVFQTHSPVVDSIAVKRRGAVRKAKLYYLRERTGKAARIKERLN</sequence>
<gene>
    <name evidence="1" type="primary">rplS</name>
    <name type="ordered locus">SeHA_C2889</name>
</gene>